<proteinExistence type="evidence at transcript level"/>
<keyword id="KW-0067">ATP-binding</keyword>
<keyword id="KW-0347">Helicase</keyword>
<keyword id="KW-0378">Hydrolase</keyword>
<keyword id="KW-0547">Nucleotide-binding</keyword>
<keyword id="KW-1185">Reference proteome</keyword>
<keyword id="KW-0694">RNA-binding</keyword>
<organism>
    <name type="scientific">Oryza sativa subsp. japonica</name>
    <name type="common">Rice</name>
    <dbReference type="NCBI Taxonomy" id="39947"/>
    <lineage>
        <taxon>Eukaryota</taxon>
        <taxon>Viridiplantae</taxon>
        <taxon>Streptophyta</taxon>
        <taxon>Embryophyta</taxon>
        <taxon>Tracheophyta</taxon>
        <taxon>Spermatophyta</taxon>
        <taxon>Magnoliopsida</taxon>
        <taxon>Liliopsida</taxon>
        <taxon>Poales</taxon>
        <taxon>Poaceae</taxon>
        <taxon>BOP clade</taxon>
        <taxon>Oryzoideae</taxon>
        <taxon>Oryzeae</taxon>
        <taxon>Oryzinae</taxon>
        <taxon>Oryza</taxon>
        <taxon>Oryza sativa</taxon>
    </lineage>
</organism>
<gene>
    <name type="primary">PL10B</name>
    <name type="ordered locus">Os07g0202100</name>
    <name type="ordered locus">LOC_Os07g10250</name>
    <name evidence="5" type="ORF">OsJ_23477</name>
    <name type="ORF">OSJNBa0081K20.14</name>
</gene>
<dbReference type="EC" id="3.6.4.13"/>
<dbReference type="EMBL" id="AP005171">
    <property type="protein sequence ID" value="BAC83834.1"/>
    <property type="molecule type" value="Genomic_DNA"/>
</dbReference>
<dbReference type="EMBL" id="AP008213">
    <property type="protein sequence ID" value="BAF21049.1"/>
    <property type="molecule type" value="Genomic_DNA"/>
</dbReference>
<dbReference type="EMBL" id="AP014963">
    <property type="protein sequence ID" value="BAT00508.1"/>
    <property type="molecule type" value="Genomic_DNA"/>
</dbReference>
<dbReference type="EMBL" id="CM000144">
    <property type="protein sequence ID" value="EEE66762.1"/>
    <property type="molecule type" value="Genomic_DNA"/>
</dbReference>
<dbReference type="EMBL" id="AK101736">
    <property type="status" value="NOT_ANNOTATED_CDS"/>
    <property type="molecule type" value="mRNA"/>
</dbReference>
<dbReference type="EMBL" id="AB042644">
    <property type="protein sequence ID" value="BAA95705.1"/>
    <property type="molecule type" value="mRNA"/>
</dbReference>
<dbReference type="RefSeq" id="XP_015646994.1">
    <property type="nucleotide sequence ID" value="XM_015791508.1"/>
</dbReference>
<dbReference type="SMR" id="Q6Z4K6"/>
<dbReference type="FunCoup" id="Q6Z4K6">
    <property type="interactions" value="2114"/>
</dbReference>
<dbReference type="STRING" id="39947.Q6Z4K6"/>
<dbReference type="PaxDb" id="39947-Q6Z4K6"/>
<dbReference type="EnsemblPlants" id="Os07t0202100-01">
    <property type="protein sequence ID" value="Os07t0202100-01"/>
    <property type="gene ID" value="Os07g0202100"/>
</dbReference>
<dbReference type="Gramene" id="Os07t0202100-01">
    <property type="protein sequence ID" value="Os07t0202100-01"/>
    <property type="gene ID" value="Os07g0202100"/>
</dbReference>
<dbReference type="KEGG" id="dosa:Os07g0202100"/>
<dbReference type="eggNOG" id="KOG0335">
    <property type="taxonomic scope" value="Eukaryota"/>
</dbReference>
<dbReference type="InParanoid" id="Q6Z4K6"/>
<dbReference type="OMA" id="DANMHEW"/>
<dbReference type="OrthoDB" id="196131at2759"/>
<dbReference type="Proteomes" id="UP000000763">
    <property type="component" value="Chromosome 7"/>
</dbReference>
<dbReference type="Proteomes" id="UP000007752">
    <property type="component" value="Chromosome 7"/>
</dbReference>
<dbReference type="Proteomes" id="UP000059680">
    <property type="component" value="Chromosome 7"/>
</dbReference>
<dbReference type="ExpressionAtlas" id="Q6Z4K6">
    <property type="expression patterns" value="baseline and differential"/>
</dbReference>
<dbReference type="GO" id="GO:0005634">
    <property type="term" value="C:nucleus"/>
    <property type="evidence" value="ECO:0000318"/>
    <property type="project" value="GO_Central"/>
</dbReference>
<dbReference type="GO" id="GO:0005524">
    <property type="term" value="F:ATP binding"/>
    <property type="evidence" value="ECO:0007669"/>
    <property type="project" value="UniProtKB-KW"/>
</dbReference>
<dbReference type="GO" id="GO:0016887">
    <property type="term" value="F:ATP hydrolysis activity"/>
    <property type="evidence" value="ECO:0007669"/>
    <property type="project" value="RHEA"/>
</dbReference>
<dbReference type="GO" id="GO:0003729">
    <property type="term" value="F:mRNA binding"/>
    <property type="evidence" value="ECO:0000318"/>
    <property type="project" value="GO_Central"/>
</dbReference>
<dbReference type="GO" id="GO:0003724">
    <property type="term" value="F:RNA helicase activity"/>
    <property type="evidence" value="ECO:0000318"/>
    <property type="project" value="GO_Central"/>
</dbReference>
<dbReference type="CDD" id="cd17967">
    <property type="entry name" value="DEADc_DDX3_DDX4"/>
    <property type="match status" value="1"/>
</dbReference>
<dbReference type="CDD" id="cd18787">
    <property type="entry name" value="SF2_C_DEAD"/>
    <property type="match status" value="1"/>
</dbReference>
<dbReference type="FunFam" id="3.40.50.300:FF:000008">
    <property type="entry name" value="ATP-dependent RNA helicase RhlB"/>
    <property type="match status" value="1"/>
</dbReference>
<dbReference type="FunFam" id="3.40.50.300:FF:000397">
    <property type="entry name" value="Probable ATP-dependent RNA helicase DDX4"/>
    <property type="match status" value="1"/>
</dbReference>
<dbReference type="Gene3D" id="3.40.50.300">
    <property type="entry name" value="P-loop containing nucleotide triphosphate hydrolases"/>
    <property type="match status" value="2"/>
</dbReference>
<dbReference type="InterPro" id="IPR011545">
    <property type="entry name" value="DEAD/DEAH_box_helicase_dom"/>
</dbReference>
<dbReference type="InterPro" id="IPR044763">
    <property type="entry name" value="Ded1/Dbp1_DEADc"/>
</dbReference>
<dbReference type="InterPro" id="IPR014001">
    <property type="entry name" value="Helicase_ATP-bd"/>
</dbReference>
<dbReference type="InterPro" id="IPR001650">
    <property type="entry name" value="Helicase_C-like"/>
</dbReference>
<dbReference type="InterPro" id="IPR027417">
    <property type="entry name" value="P-loop_NTPase"/>
</dbReference>
<dbReference type="InterPro" id="IPR014014">
    <property type="entry name" value="RNA_helicase_DEAD_Q_motif"/>
</dbReference>
<dbReference type="PANTHER" id="PTHR47958">
    <property type="entry name" value="ATP-DEPENDENT RNA HELICASE DBP3"/>
    <property type="match status" value="1"/>
</dbReference>
<dbReference type="Pfam" id="PF00270">
    <property type="entry name" value="DEAD"/>
    <property type="match status" value="1"/>
</dbReference>
<dbReference type="Pfam" id="PF00271">
    <property type="entry name" value="Helicase_C"/>
    <property type="match status" value="1"/>
</dbReference>
<dbReference type="SMART" id="SM00487">
    <property type="entry name" value="DEXDc"/>
    <property type="match status" value="1"/>
</dbReference>
<dbReference type="SMART" id="SM00490">
    <property type="entry name" value="HELICc"/>
    <property type="match status" value="1"/>
</dbReference>
<dbReference type="SUPFAM" id="SSF52540">
    <property type="entry name" value="P-loop containing nucleoside triphosphate hydrolases"/>
    <property type="match status" value="1"/>
</dbReference>
<dbReference type="PROSITE" id="PS51192">
    <property type="entry name" value="HELICASE_ATP_BIND_1"/>
    <property type="match status" value="1"/>
</dbReference>
<dbReference type="PROSITE" id="PS51194">
    <property type="entry name" value="HELICASE_CTER"/>
    <property type="match status" value="1"/>
</dbReference>
<dbReference type="PROSITE" id="PS51195">
    <property type="entry name" value="Q_MOTIF"/>
    <property type="match status" value="1"/>
</dbReference>
<comment type="catalytic activity">
    <reaction>
        <text>ATP + H2O = ADP + phosphate + H(+)</text>
        <dbReference type="Rhea" id="RHEA:13065"/>
        <dbReference type="ChEBI" id="CHEBI:15377"/>
        <dbReference type="ChEBI" id="CHEBI:15378"/>
        <dbReference type="ChEBI" id="CHEBI:30616"/>
        <dbReference type="ChEBI" id="CHEBI:43474"/>
        <dbReference type="ChEBI" id="CHEBI:456216"/>
        <dbReference type="EC" id="3.6.4.13"/>
    </reaction>
</comment>
<comment type="domain">
    <text>The Q motif is unique to and characteristic of the DEAD box family of RNA helicases and controls ATP binding and hydrolysis.</text>
</comment>
<comment type="similarity">
    <text evidence="4">Belongs to the DEAD box helicase family. DDX3/DED1 subfamily.</text>
</comment>
<reference key="1">
    <citation type="journal article" date="2005" name="Nature">
        <title>The map-based sequence of the rice genome.</title>
        <authorList>
            <consortium name="International rice genome sequencing project (IRGSP)"/>
        </authorList>
    </citation>
    <scope>NUCLEOTIDE SEQUENCE [LARGE SCALE GENOMIC DNA]</scope>
    <source>
        <strain>cv. Nipponbare</strain>
    </source>
</reference>
<reference key="2">
    <citation type="journal article" date="2008" name="Nucleic Acids Res.">
        <title>The rice annotation project database (RAP-DB): 2008 update.</title>
        <authorList>
            <consortium name="The rice annotation project (RAP)"/>
        </authorList>
    </citation>
    <scope>GENOME REANNOTATION</scope>
    <source>
        <strain>cv. Nipponbare</strain>
    </source>
</reference>
<reference key="3">
    <citation type="journal article" date="2013" name="Rice">
        <title>Improvement of the Oryza sativa Nipponbare reference genome using next generation sequence and optical map data.</title>
        <authorList>
            <person name="Kawahara Y."/>
            <person name="de la Bastide M."/>
            <person name="Hamilton J.P."/>
            <person name="Kanamori H."/>
            <person name="McCombie W.R."/>
            <person name="Ouyang S."/>
            <person name="Schwartz D.C."/>
            <person name="Tanaka T."/>
            <person name="Wu J."/>
            <person name="Zhou S."/>
            <person name="Childs K.L."/>
            <person name="Davidson R.M."/>
            <person name="Lin H."/>
            <person name="Quesada-Ocampo L."/>
            <person name="Vaillancourt B."/>
            <person name="Sakai H."/>
            <person name="Lee S.S."/>
            <person name="Kim J."/>
            <person name="Numa H."/>
            <person name="Itoh T."/>
            <person name="Buell C.R."/>
            <person name="Matsumoto T."/>
        </authorList>
    </citation>
    <scope>GENOME REANNOTATION</scope>
    <source>
        <strain>cv. Nipponbare</strain>
    </source>
</reference>
<reference key="4">
    <citation type="journal article" date="2005" name="PLoS Biol.">
        <title>The genomes of Oryza sativa: a history of duplications.</title>
        <authorList>
            <person name="Yu J."/>
            <person name="Wang J."/>
            <person name="Lin W."/>
            <person name="Li S."/>
            <person name="Li H."/>
            <person name="Zhou J."/>
            <person name="Ni P."/>
            <person name="Dong W."/>
            <person name="Hu S."/>
            <person name="Zeng C."/>
            <person name="Zhang J."/>
            <person name="Zhang Y."/>
            <person name="Li R."/>
            <person name="Xu Z."/>
            <person name="Li S."/>
            <person name="Li X."/>
            <person name="Zheng H."/>
            <person name="Cong L."/>
            <person name="Lin L."/>
            <person name="Yin J."/>
            <person name="Geng J."/>
            <person name="Li G."/>
            <person name="Shi J."/>
            <person name="Liu J."/>
            <person name="Lv H."/>
            <person name="Li J."/>
            <person name="Wang J."/>
            <person name="Deng Y."/>
            <person name="Ran L."/>
            <person name="Shi X."/>
            <person name="Wang X."/>
            <person name="Wu Q."/>
            <person name="Li C."/>
            <person name="Ren X."/>
            <person name="Wang J."/>
            <person name="Wang X."/>
            <person name="Li D."/>
            <person name="Liu D."/>
            <person name="Zhang X."/>
            <person name="Ji Z."/>
            <person name="Zhao W."/>
            <person name="Sun Y."/>
            <person name="Zhang Z."/>
            <person name="Bao J."/>
            <person name="Han Y."/>
            <person name="Dong L."/>
            <person name="Ji J."/>
            <person name="Chen P."/>
            <person name="Wu S."/>
            <person name="Liu J."/>
            <person name="Xiao Y."/>
            <person name="Bu D."/>
            <person name="Tan J."/>
            <person name="Yang L."/>
            <person name="Ye C."/>
            <person name="Zhang J."/>
            <person name="Xu J."/>
            <person name="Zhou Y."/>
            <person name="Yu Y."/>
            <person name="Zhang B."/>
            <person name="Zhuang S."/>
            <person name="Wei H."/>
            <person name="Liu B."/>
            <person name="Lei M."/>
            <person name="Yu H."/>
            <person name="Li Y."/>
            <person name="Xu H."/>
            <person name="Wei S."/>
            <person name="He X."/>
            <person name="Fang L."/>
            <person name="Zhang Z."/>
            <person name="Zhang Y."/>
            <person name="Huang X."/>
            <person name="Su Z."/>
            <person name="Tong W."/>
            <person name="Li J."/>
            <person name="Tong Z."/>
            <person name="Li S."/>
            <person name="Ye J."/>
            <person name="Wang L."/>
            <person name="Fang L."/>
            <person name="Lei T."/>
            <person name="Chen C.-S."/>
            <person name="Chen H.-C."/>
            <person name="Xu Z."/>
            <person name="Li H."/>
            <person name="Huang H."/>
            <person name="Zhang F."/>
            <person name="Xu H."/>
            <person name="Li N."/>
            <person name="Zhao C."/>
            <person name="Li S."/>
            <person name="Dong L."/>
            <person name="Huang Y."/>
            <person name="Li L."/>
            <person name="Xi Y."/>
            <person name="Qi Q."/>
            <person name="Li W."/>
            <person name="Zhang B."/>
            <person name="Hu W."/>
            <person name="Zhang Y."/>
            <person name="Tian X."/>
            <person name="Jiao Y."/>
            <person name="Liang X."/>
            <person name="Jin J."/>
            <person name="Gao L."/>
            <person name="Zheng W."/>
            <person name="Hao B."/>
            <person name="Liu S.-M."/>
            <person name="Wang W."/>
            <person name="Yuan L."/>
            <person name="Cao M."/>
            <person name="McDermott J."/>
            <person name="Samudrala R."/>
            <person name="Wang J."/>
            <person name="Wong G.K.-S."/>
            <person name="Yang H."/>
        </authorList>
    </citation>
    <scope>NUCLEOTIDE SEQUENCE [LARGE SCALE GENOMIC DNA]</scope>
    <source>
        <strain>cv. Nipponbare</strain>
    </source>
</reference>
<reference key="5">
    <citation type="journal article" date="2003" name="Science">
        <title>Collection, mapping, and annotation of over 28,000 cDNA clones from japonica rice.</title>
        <authorList>
            <consortium name="The rice full-length cDNA consortium"/>
        </authorList>
    </citation>
    <scope>NUCLEOTIDE SEQUENCE [LARGE SCALE MRNA]</scope>
    <source>
        <strain>cv. Nipponbare</strain>
    </source>
</reference>
<reference key="6">
    <citation type="submission" date="2000-05" db="EMBL/GenBank/DDBJ databases">
        <title>PL10-like genes in rice.</title>
        <authorList>
            <person name="Mochizuki K."/>
        </authorList>
    </citation>
    <scope>NUCLEOTIDE SEQUENCE [MRNA] OF 217-330</scope>
</reference>
<sequence length="638" mass="67172">MRSSWADSAANAEESAPAAAANHGNSRLPRSSYVPPHLRGQAAPAAPAQAGALPSAAAAAQPSVGQPGVVGGPRWAGIVNGGGGGGGGSVGGSRQGFGAGGRGGGGGGGGGAWNSRPGGWDRRDREPDPFANSEAAEVDFEGENTGINFEAYEDIPVETSGHDVPPPANTFAEIDLGDALNENIRRCKYVKPTPVQRYAIPISIAGRDLMACAQTGSGKTAAFCFPIISGIMRSRPPPRSRGSRTAYPLALILSPTRELSVQIHEEARKFAYQTGVKVVVAYGGAPITQQLRELERGVEILVATPGRLMDLLERARVSLQMIKYLALDEADRMLDMGFEPQIRKIVEQMDMPPRGERQTMLFSATFPKEIQRMASDFLADYIFLAVGRVGSSTDLIVQRVEFVLDADKRSYLMDLLHAQRANGTHGKQALTLVFVETKRGADALENWLYNNGFPATSIHGDRTQQEREYALRSFKSGATPILVATDVAARGLDIPHVAHVINFDLPNDIDDYVHRIGRTGRAGKSGLATAFFNESNTPLARPLSELMQEANQEVPQWLERYAARSSFGGGGGRNRRSGGGARFGGRDFRRDRGSGGGGYGGGGGGYGGGGYGGGGGGGGYGGGSSYGGGGQGFSSAWD</sequence>
<evidence type="ECO:0000255" key="1">
    <source>
        <dbReference type="PROSITE-ProRule" id="PRU00541"/>
    </source>
</evidence>
<evidence type="ECO:0000255" key="2">
    <source>
        <dbReference type="PROSITE-ProRule" id="PRU00542"/>
    </source>
</evidence>
<evidence type="ECO:0000256" key="3">
    <source>
        <dbReference type="SAM" id="MobiDB-lite"/>
    </source>
</evidence>
<evidence type="ECO:0000305" key="4"/>
<evidence type="ECO:0000312" key="5">
    <source>
        <dbReference type="EMBL" id="EEE66762.1"/>
    </source>
</evidence>
<accession>Q6Z4K6</accession>
<accession>B9FW25</accession>
<accession>Q9MAW8</accession>
<feature type="chain" id="PRO_0000282451" description="DEAD-box ATP-dependent RNA helicase 52B">
    <location>
        <begin position="1"/>
        <end position="638"/>
    </location>
</feature>
<feature type="domain" description="Helicase ATP-binding" evidence="1">
    <location>
        <begin position="200"/>
        <end position="384"/>
    </location>
</feature>
<feature type="domain" description="Helicase C-terminal" evidence="2">
    <location>
        <begin position="411"/>
        <end position="562"/>
    </location>
</feature>
<feature type="region of interest" description="Disordered" evidence="3">
    <location>
        <begin position="1"/>
        <end position="129"/>
    </location>
</feature>
<feature type="region of interest" description="Disordered" evidence="3">
    <location>
        <begin position="565"/>
        <end position="638"/>
    </location>
</feature>
<feature type="short sequence motif" description="Q motif">
    <location>
        <begin position="169"/>
        <end position="197"/>
    </location>
</feature>
<feature type="short sequence motif" description="DEAD box">
    <location>
        <begin position="328"/>
        <end position="331"/>
    </location>
</feature>
<feature type="compositionally biased region" description="Low complexity" evidence="3">
    <location>
        <begin position="1"/>
        <end position="21"/>
    </location>
</feature>
<feature type="compositionally biased region" description="Low complexity" evidence="3">
    <location>
        <begin position="40"/>
        <end position="67"/>
    </location>
</feature>
<feature type="compositionally biased region" description="Gly residues" evidence="3">
    <location>
        <begin position="79"/>
        <end position="112"/>
    </location>
</feature>
<feature type="compositionally biased region" description="Basic and acidic residues" evidence="3">
    <location>
        <begin position="119"/>
        <end position="128"/>
    </location>
</feature>
<feature type="compositionally biased region" description="Gly residues" evidence="3">
    <location>
        <begin position="567"/>
        <end position="583"/>
    </location>
</feature>
<feature type="compositionally biased region" description="Basic and acidic residues" evidence="3">
    <location>
        <begin position="584"/>
        <end position="593"/>
    </location>
</feature>
<feature type="compositionally biased region" description="Gly residues" evidence="3">
    <location>
        <begin position="594"/>
        <end position="632"/>
    </location>
</feature>
<feature type="binding site" evidence="1">
    <location>
        <begin position="213"/>
        <end position="220"/>
    </location>
    <ligand>
        <name>ATP</name>
        <dbReference type="ChEBI" id="CHEBI:30616"/>
    </ligand>
</feature>
<feature type="sequence conflict" description="In Ref. 5; AK101736." evidence="4" ref="5">
    <original>I</original>
    <variation>F</variation>
    <location>
        <position position="231"/>
    </location>
</feature>
<name>RH52B_ORYSJ</name>
<protein>
    <recommendedName>
        <fullName>DEAD-box ATP-dependent RNA helicase 52B</fullName>
        <ecNumber>3.6.4.13</ecNumber>
    </recommendedName>
    <alternativeName>
        <fullName>OsPL10b</fullName>
    </alternativeName>
</protein>